<proteinExistence type="inferred from homology"/>
<keyword id="KW-1185">Reference proteome</keyword>
<keyword id="KW-0687">Ribonucleoprotein</keyword>
<keyword id="KW-0689">Ribosomal protein</keyword>
<organism>
    <name type="scientific">Nocardia farcinica (strain IFM 10152)</name>
    <dbReference type="NCBI Taxonomy" id="247156"/>
    <lineage>
        <taxon>Bacteria</taxon>
        <taxon>Bacillati</taxon>
        <taxon>Actinomycetota</taxon>
        <taxon>Actinomycetes</taxon>
        <taxon>Mycobacteriales</taxon>
        <taxon>Nocardiaceae</taxon>
        <taxon>Nocardia</taxon>
    </lineage>
</organism>
<evidence type="ECO:0000255" key="1">
    <source>
        <dbReference type="HAMAP-Rule" id="MF_00340"/>
    </source>
</evidence>
<evidence type="ECO:0000256" key="2">
    <source>
        <dbReference type="SAM" id="MobiDB-lite"/>
    </source>
</evidence>
<evidence type="ECO:0000305" key="3"/>
<accession>Q5YS07</accession>
<protein>
    <recommendedName>
        <fullName evidence="1">Large ribosomal subunit protein bL32A</fullName>
    </recommendedName>
    <alternativeName>
        <fullName evidence="3">50S ribosomal protein L32 1</fullName>
    </alternativeName>
</protein>
<gene>
    <name evidence="1" type="primary">rpmF1</name>
    <name type="ordered locus">NFA_41850</name>
</gene>
<feature type="chain" id="PRO_0000225745" description="Large ribosomal subunit protein bL32A">
    <location>
        <begin position="1"/>
        <end position="60"/>
    </location>
</feature>
<feature type="region of interest" description="Disordered" evidence="2">
    <location>
        <begin position="1"/>
        <end position="21"/>
    </location>
</feature>
<feature type="compositionally biased region" description="Basic residues" evidence="2">
    <location>
        <begin position="1"/>
        <end position="19"/>
    </location>
</feature>
<comment type="similarity">
    <text evidence="1">Belongs to the bacterial ribosomal protein bL32 family.</text>
</comment>
<sequence>MAVPKRRMSRSNTRSRRSQWKAAAPTLITCPNRACGQKTLPHIACPSCGTYKGRQVTAAV</sequence>
<dbReference type="EMBL" id="AP006618">
    <property type="protein sequence ID" value="BAD59034.1"/>
    <property type="molecule type" value="Genomic_DNA"/>
</dbReference>
<dbReference type="SMR" id="Q5YS07"/>
<dbReference type="STRING" id="247156.NFA_41850"/>
<dbReference type="GeneID" id="61134820"/>
<dbReference type="KEGG" id="nfa:NFA_41850"/>
<dbReference type="eggNOG" id="COG0333">
    <property type="taxonomic scope" value="Bacteria"/>
</dbReference>
<dbReference type="HOGENOM" id="CLU_129084_1_1_11"/>
<dbReference type="OrthoDB" id="9807363at2"/>
<dbReference type="Proteomes" id="UP000006820">
    <property type="component" value="Chromosome"/>
</dbReference>
<dbReference type="GO" id="GO:0015934">
    <property type="term" value="C:large ribosomal subunit"/>
    <property type="evidence" value="ECO:0007669"/>
    <property type="project" value="InterPro"/>
</dbReference>
<dbReference type="GO" id="GO:0003735">
    <property type="term" value="F:structural constituent of ribosome"/>
    <property type="evidence" value="ECO:0007669"/>
    <property type="project" value="InterPro"/>
</dbReference>
<dbReference type="GO" id="GO:0006412">
    <property type="term" value="P:translation"/>
    <property type="evidence" value="ECO:0007669"/>
    <property type="project" value="UniProtKB-UniRule"/>
</dbReference>
<dbReference type="HAMAP" id="MF_00340">
    <property type="entry name" value="Ribosomal_bL32"/>
    <property type="match status" value="1"/>
</dbReference>
<dbReference type="InterPro" id="IPR002677">
    <property type="entry name" value="Ribosomal_bL32"/>
</dbReference>
<dbReference type="InterPro" id="IPR044957">
    <property type="entry name" value="Ribosomal_bL32_bact"/>
</dbReference>
<dbReference type="InterPro" id="IPR011332">
    <property type="entry name" value="Ribosomal_zn-bd"/>
</dbReference>
<dbReference type="NCBIfam" id="TIGR01031">
    <property type="entry name" value="rpmF_bact"/>
    <property type="match status" value="1"/>
</dbReference>
<dbReference type="PANTHER" id="PTHR35534">
    <property type="entry name" value="50S RIBOSOMAL PROTEIN L32"/>
    <property type="match status" value="1"/>
</dbReference>
<dbReference type="PANTHER" id="PTHR35534:SF1">
    <property type="entry name" value="LARGE RIBOSOMAL SUBUNIT PROTEIN BL32"/>
    <property type="match status" value="1"/>
</dbReference>
<dbReference type="Pfam" id="PF01783">
    <property type="entry name" value="Ribosomal_L32p"/>
    <property type="match status" value="1"/>
</dbReference>
<dbReference type="SUPFAM" id="SSF57829">
    <property type="entry name" value="Zn-binding ribosomal proteins"/>
    <property type="match status" value="1"/>
</dbReference>
<reference key="1">
    <citation type="journal article" date="2004" name="Proc. Natl. Acad. Sci. U.S.A.">
        <title>The complete genomic sequence of Nocardia farcinica IFM 10152.</title>
        <authorList>
            <person name="Ishikawa J."/>
            <person name="Yamashita A."/>
            <person name="Mikami Y."/>
            <person name="Hoshino Y."/>
            <person name="Kurita H."/>
            <person name="Hotta K."/>
            <person name="Shiba T."/>
            <person name="Hattori M."/>
        </authorList>
    </citation>
    <scope>NUCLEOTIDE SEQUENCE [LARGE SCALE GENOMIC DNA]</scope>
    <source>
        <strain>IFM 10152</strain>
    </source>
</reference>
<name>RL321_NOCFA</name>